<comment type="induction">
    <text evidence="2">By abscisic acid (ABA) and water stress.</text>
</comment>
<comment type="similarity">
    <text evidence="3">Belongs to the plant dehydrin family.</text>
</comment>
<keyword id="KW-1185">Reference proteome</keyword>
<keyword id="KW-0346">Stress response</keyword>
<reference key="1">
    <citation type="journal article" date="1990" name="Plant Mol. Biol.">
        <title>Four tightly linked rab genes are differentially expressed in rice.</title>
        <authorList>
            <person name="Yamaguchi-Shinozaki K."/>
            <person name="Mundy J."/>
            <person name="Chua N.-H."/>
        </authorList>
    </citation>
    <scope>NUCLEOTIDE SEQUENCE [GENOMIC DNA]</scope>
    <scope>INDUCTION</scope>
    <source>
        <strain>cv. IR36</strain>
        <tissue>Seed</tissue>
    </source>
</reference>
<reference key="2">
    <citation type="journal article" date="2005" name="PLoS Biol.">
        <title>The genomes of Oryza sativa: a history of duplications.</title>
        <authorList>
            <person name="Yu J."/>
            <person name="Wang J."/>
            <person name="Lin W."/>
            <person name="Li S."/>
            <person name="Li H."/>
            <person name="Zhou J."/>
            <person name="Ni P."/>
            <person name="Dong W."/>
            <person name="Hu S."/>
            <person name="Zeng C."/>
            <person name="Zhang J."/>
            <person name="Zhang Y."/>
            <person name="Li R."/>
            <person name="Xu Z."/>
            <person name="Li S."/>
            <person name="Li X."/>
            <person name="Zheng H."/>
            <person name="Cong L."/>
            <person name="Lin L."/>
            <person name="Yin J."/>
            <person name="Geng J."/>
            <person name="Li G."/>
            <person name="Shi J."/>
            <person name="Liu J."/>
            <person name="Lv H."/>
            <person name="Li J."/>
            <person name="Wang J."/>
            <person name="Deng Y."/>
            <person name="Ran L."/>
            <person name="Shi X."/>
            <person name="Wang X."/>
            <person name="Wu Q."/>
            <person name="Li C."/>
            <person name="Ren X."/>
            <person name="Wang J."/>
            <person name="Wang X."/>
            <person name="Li D."/>
            <person name="Liu D."/>
            <person name="Zhang X."/>
            <person name="Ji Z."/>
            <person name="Zhao W."/>
            <person name="Sun Y."/>
            <person name="Zhang Z."/>
            <person name="Bao J."/>
            <person name="Han Y."/>
            <person name="Dong L."/>
            <person name="Ji J."/>
            <person name="Chen P."/>
            <person name="Wu S."/>
            <person name="Liu J."/>
            <person name="Xiao Y."/>
            <person name="Bu D."/>
            <person name="Tan J."/>
            <person name="Yang L."/>
            <person name="Ye C."/>
            <person name="Zhang J."/>
            <person name="Xu J."/>
            <person name="Zhou Y."/>
            <person name="Yu Y."/>
            <person name="Zhang B."/>
            <person name="Zhuang S."/>
            <person name="Wei H."/>
            <person name="Liu B."/>
            <person name="Lei M."/>
            <person name="Yu H."/>
            <person name="Li Y."/>
            <person name="Xu H."/>
            <person name="Wei S."/>
            <person name="He X."/>
            <person name="Fang L."/>
            <person name="Zhang Z."/>
            <person name="Zhang Y."/>
            <person name="Huang X."/>
            <person name="Su Z."/>
            <person name="Tong W."/>
            <person name="Li J."/>
            <person name="Tong Z."/>
            <person name="Li S."/>
            <person name="Ye J."/>
            <person name="Wang L."/>
            <person name="Fang L."/>
            <person name="Lei T."/>
            <person name="Chen C.-S."/>
            <person name="Chen H.-C."/>
            <person name="Xu Z."/>
            <person name="Li H."/>
            <person name="Huang H."/>
            <person name="Zhang F."/>
            <person name="Xu H."/>
            <person name="Li N."/>
            <person name="Zhao C."/>
            <person name="Li S."/>
            <person name="Dong L."/>
            <person name="Huang Y."/>
            <person name="Li L."/>
            <person name="Xi Y."/>
            <person name="Qi Q."/>
            <person name="Li W."/>
            <person name="Zhang B."/>
            <person name="Hu W."/>
            <person name="Zhang Y."/>
            <person name="Tian X."/>
            <person name="Jiao Y."/>
            <person name="Liang X."/>
            <person name="Jin J."/>
            <person name="Gao L."/>
            <person name="Zheng W."/>
            <person name="Hao B."/>
            <person name="Liu S.-M."/>
            <person name="Wang W."/>
            <person name="Yuan L."/>
            <person name="Cao M."/>
            <person name="McDermott J."/>
            <person name="Samudrala R."/>
            <person name="Wang J."/>
            <person name="Wong G.K.-S."/>
            <person name="Yang H."/>
        </authorList>
    </citation>
    <scope>NUCLEOTIDE SEQUENCE [LARGE SCALE GENOMIC DNA]</scope>
    <source>
        <strain>cv. 93-11</strain>
    </source>
</reference>
<accession>A2ZDX6</accession>
<accession>P22912</accession>
<accession>Q53L96</accession>
<proteinExistence type="evidence at transcript level"/>
<feature type="chain" id="PRO_0000295014" description="Dehydrin Rab16C">
    <location>
        <begin position="1"/>
        <end position="164"/>
    </location>
</feature>
<feature type="region of interest" description="Disordered" evidence="1">
    <location>
        <begin position="42"/>
        <end position="164"/>
    </location>
</feature>
<feature type="compositionally biased region" description="Gly residues" evidence="1">
    <location>
        <begin position="42"/>
        <end position="51"/>
    </location>
</feature>
<feature type="compositionally biased region" description="Low complexity" evidence="1">
    <location>
        <begin position="105"/>
        <end position="115"/>
    </location>
</feature>
<feature type="compositionally biased region" description="Gly residues" evidence="1">
    <location>
        <begin position="128"/>
        <end position="138"/>
    </location>
</feature>
<feature type="compositionally biased region" description="Basic and acidic residues" evidence="1">
    <location>
        <begin position="147"/>
        <end position="164"/>
    </location>
</feature>
<feature type="sequence conflict" description="In Ref. 1; X52423." evidence="3" ref="1">
    <original>G</original>
    <variation>R</variation>
    <location>
        <position position="19"/>
    </location>
</feature>
<feature type="sequence conflict" description="In Ref. 1; X52423." evidence="3" ref="1">
    <original>G</original>
    <variation>A</variation>
    <location>
        <position position="105"/>
    </location>
</feature>
<sequence length="164" mass="16733">MENYQGQHGYGADRVDVYGNPVAGQYGGGATAPGGGHGVMGMGGHHAGAGGQFQPVKEEHKTGGILHRSGSSSSSSSSEDDGMGGRRKKGIKEKIKEKLPGGNKGNNHQQQQMMGNTGGAYGQQGHAGMTGAGTGTGVHGAEYGNTGEKKGFMDKIKEKLPGQH</sequence>
<dbReference type="EMBL" id="X52423">
    <property type="status" value="NOT_ANNOTATED_CDS"/>
    <property type="molecule type" value="Genomic_DNA"/>
</dbReference>
<dbReference type="EMBL" id="CM000136">
    <property type="protein sequence ID" value="EAY80810.1"/>
    <property type="molecule type" value="Genomic_DNA"/>
</dbReference>
<dbReference type="PIR" id="S11847">
    <property type="entry name" value="S11847"/>
</dbReference>
<dbReference type="STRING" id="39946.A2ZDX6"/>
<dbReference type="EnsemblPlants" id="BGIOSGA034053-TA">
    <property type="protein sequence ID" value="BGIOSGA034053-PA"/>
    <property type="gene ID" value="BGIOSGA034053"/>
</dbReference>
<dbReference type="EnsemblPlants" id="OsGoSa_11g0012850.01">
    <property type="protein sequence ID" value="OsGoSa_11g0012850.01"/>
    <property type="gene ID" value="OsGoSa_11g0012850"/>
</dbReference>
<dbReference type="EnsemblPlants" id="OsKYG_11g0013220.01">
    <property type="protein sequence ID" value="OsKYG_11g0013220.01"/>
    <property type="gene ID" value="OsKYG_11g0013220"/>
</dbReference>
<dbReference type="EnsemblPlants" id="OsLima_11g0013130.01">
    <property type="protein sequence ID" value="OsLima_11g0013130.01"/>
    <property type="gene ID" value="OsLima_11g0013130"/>
</dbReference>
<dbReference type="EnsemblPlants" id="OsLiXu_Ung0074740.03">
    <property type="protein sequence ID" value="OsLiXu_Ung0074740.03"/>
    <property type="gene ID" value="OsLiXu_Ung0074740"/>
</dbReference>
<dbReference type="EnsemblPlants" id="OsMH63_11G013490_01">
    <property type="protein sequence ID" value="OsMH63_11G013490_01"/>
    <property type="gene ID" value="OsMH63_11G013490"/>
</dbReference>
<dbReference type="Gramene" id="BGIOSGA034053-TA">
    <property type="protein sequence ID" value="BGIOSGA034053-PA"/>
    <property type="gene ID" value="BGIOSGA034053"/>
</dbReference>
<dbReference type="Gramene" id="OsGoSa_11g0012850.01">
    <property type="protein sequence ID" value="OsGoSa_11g0012850.01"/>
    <property type="gene ID" value="OsGoSa_11g0012850"/>
</dbReference>
<dbReference type="Gramene" id="OsKYG_11g0013220.01">
    <property type="protein sequence ID" value="OsKYG_11g0013220.01"/>
    <property type="gene ID" value="OsKYG_11g0013220"/>
</dbReference>
<dbReference type="Gramene" id="OsLima_11g0013130.01">
    <property type="protein sequence ID" value="OsLima_11g0013130.01"/>
    <property type="gene ID" value="OsLima_11g0013130"/>
</dbReference>
<dbReference type="Gramene" id="OsLiXu_Ung0074740.03">
    <property type="protein sequence ID" value="OsLiXu_Ung0074740.03"/>
    <property type="gene ID" value="OsLiXu_Ung0074740"/>
</dbReference>
<dbReference type="Gramene" id="OsMH63_11G013490_01">
    <property type="protein sequence ID" value="OsMH63_11G013490_01"/>
    <property type="gene ID" value="OsMH63_11G013490"/>
</dbReference>
<dbReference type="HOGENOM" id="CLU_060028_1_0_1"/>
<dbReference type="OMA" id="MEYTRDE"/>
<dbReference type="Proteomes" id="UP000007015">
    <property type="component" value="Chromosome 11"/>
</dbReference>
<dbReference type="GO" id="GO:0005829">
    <property type="term" value="C:cytosol"/>
    <property type="evidence" value="ECO:0007669"/>
    <property type="project" value="TreeGrafter"/>
</dbReference>
<dbReference type="GO" id="GO:0009631">
    <property type="term" value="P:cold acclimation"/>
    <property type="evidence" value="ECO:0007669"/>
    <property type="project" value="TreeGrafter"/>
</dbReference>
<dbReference type="GO" id="GO:0009737">
    <property type="term" value="P:response to abscisic acid"/>
    <property type="evidence" value="ECO:0007669"/>
    <property type="project" value="TreeGrafter"/>
</dbReference>
<dbReference type="GO" id="GO:0009414">
    <property type="term" value="P:response to water deprivation"/>
    <property type="evidence" value="ECO:0007669"/>
    <property type="project" value="TreeGrafter"/>
</dbReference>
<dbReference type="InterPro" id="IPR000167">
    <property type="entry name" value="Dehydrin"/>
</dbReference>
<dbReference type="InterPro" id="IPR030513">
    <property type="entry name" value="Dehydrin_CS"/>
</dbReference>
<dbReference type="PANTHER" id="PTHR33346:SF57">
    <property type="entry name" value="DEHYDRIN RAB16B"/>
    <property type="match status" value="1"/>
</dbReference>
<dbReference type="PANTHER" id="PTHR33346">
    <property type="entry name" value="DEHYDRIN XERO 2-RELATED"/>
    <property type="match status" value="1"/>
</dbReference>
<dbReference type="Pfam" id="PF00257">
    <property type="entry name" value="Dehydrin"/>
    <property type="match status" value="1"/>
</dbReference>
<dbReference type="PROSITE" id="PS00315">
    <property type="entry name" value="DEHYDRIN_1"/>
    <property type="match status" value="1"/>
</dbReference>
<dbReference type="PROSITE" id="PS00823">
    <property type="entry name" value="DEHYDRIN_2"/>
    <property type="match status" value="2"/>
</dbReference>
<organism>
    <name type="scientific">Oryza sativa subsp. indica</name>
    <name type="common">Rice</name>
    <dbReference type="NCBI Taxonomy" id="39946"/>
    <lineage>
        <taxon>Eukaryota</taxon>
        <taxon>Viridiplantae</taxon>
        <taxon>Streptophyta</taxon>
        <taxon>Embryophyta</taxon>
        <taxon>Tracheophyta</taxon>
        <taxon>Spermatophyta</taxon>
        <taxon>Magnoliopsida</taxon>
        <taxon>Liliopsida</taxon>
        <taxon>Poales</taxon>
        <taxon>Poaceae</taxon>
        <taxon>BOP clade</taxon>
        <taxon>Oryzoideae</taxon>
        <taxon>Oryzeae</taxon>
        <taxon>Oryzinae</taxon>
        <taxon>Oryza</taxon>
        <taxon>Oryza sativa</taxon>
    </lineage>
</organism>
<gene>
    <name type="primary">RAB16C</name>
    <name type="ORF">OsI_034769</name>
</gene>
<name>DH16C_ORYSI</name>
<evidence type="ECO:0000256" key="1">
    <source>
        <dbReference type="SAM" id="MobiDB-lite"/>
    </source>
</evidence>
<evidence type="ECO:0000269" key="2">
    <source>
    </source>
</evidence>
<evidence type="ECO:0000305" key="3"/>
<protein>
    <recommendedName>
        <fullName>Dehydrin Rab16C</fullName>
    </recommendedName>
</protein>